<reference key="1">
    <citation type="journal article" date="2003" name="Science">
        <title>A genomic view of the human-Bacteroides thetaiotaomicron symbiosis.</title>
        <authorList>
            <person name="Xu J."/>
            <person name="Bjursell M.K."/>
            <person name="Himrod J."/>
            <person name="Deng S."/>
            <person name="Carmichael L.K."/>
            <person name="Chiang H.C."/>
            <person name="Hooper L.V."/>
            <person name="Gordon J.I."/>
        </authorList>
    </citation>
    <scope>NUCLEOTIDE SEQUENCE [LARGE SCALE GENOMIC DNA]</scope>
    <source>
        <strain>ATCC 29148 / DSM 2079 / JCM 5827 / CCUG 10774 / NCTC 10582 / VPI-5482 / E50</strain>
    </source>
</reference>
<feature type="chain" id="PRO_0000076704" description="3-isopropylmalate dehydratase large subunit">
    <location>
        <begin position="1"/>
        <end position="464"/>
    </location>
</feature>
<feature type="binding site" evidence="1">
    <location>
        <position position="345"/>
    </location>
    <ligand>
        <name>[4Fe-4S] cluster</name>
        <dbReference type="ChEBI" id="CHEBI:49883"/>
    </ligand>
</feature>
<feature type="binding site" evidence="1">
    <location>
        <position position="405"/>
    </location>
    <ligand>
        <name>[4Fe-4S] cluster</name>
        <dbReference type="ChEBI" id="CHEBI:49883"/>
    </ligand>
</feature>
<feature type="binding site" evidence="1">
    <location>
        <position position="408"/>
    </location>
    <ligand>
        <name>[4Fe-4S] cluster</name>
        <dbReference type="ChEBI" id="CHEBI:49883"/>
    </ligand>
</feature>
<evidence type="ECO:0000255" key="1">
    <source>
        <dbReference type="HAMAP-Rule" id="MF_01026"/>
    </source>
</evidence>
<accession>Q8A6L7</accession>
<dbReference type="EC" id="4.2.1.33" evidence="1"/>
<dbReference type="EMBL" id="AE015928">
    <property type="protein sequence ID" value="AAO76967.1"/>
    <property type="molecule type" value="Genomic_DNA"/>
</dbReference>
<dbReference type="RefSeq" id="NP_810773.1">
    <property type="nucleotide sequence ID" value="NC_004663.1"/>
</dbReference>
<dbReference type="RefSeq" id="WP_008763197.1">
    <property type="nucleotide sequence ID" value="NZ_UYXG01000014.1"/>
</dbReference>
<dbReference type="SMR" id="Q8A6L7"/>
<dbReference type="FunCoup" id="Q8A6L7">
    <property type="interactions" value="486"/>
</dbReference>
<dbReference type="STRING" id="226186.BT_1860"/>
<dbReference type="PaxDb" id="226186-BT_1860"/>
<dbReference type="DNASU" id="1075937"/>
<dbReference type="EnsemblBacteria" id="AAO76967">
    <property type="protein sequence ID" value="AAO76967"/>
    <property type="gene ID" value="BT_1860"/>
</dbReference>
<dbReference type="GeneID" id="60927848"/>
<dbReference type="KEGG" id="bth:BT_1860"/>
<dbReference type="PATRIC" id="fig|226186.12.peg.1911"/>
<dbReference type="eggNOG" id="COG0065">
    <property type="taxonomic scope" value="Bacteria"/>
</dbReference>
<dbReference type="HOGENOM" id="CLU_006714_3_4_10"/>
<dbReference type="InParanoid" id="Q8A6L7"/>
<dbReference type="OrthoDB" id="9764318at2"/>
<dbReference type="UniPathway" id="UPA00048">
    <property type="reaction ID" value="UER00071"/>
</dbReference>
<dbReference type="Proteomes" id="UP000001414">
    <property type="component" value="Chromosome"/>
</dbReference>
<dbReference type="GO" id="GO:0003861">
    <property type="term" value="F:3-isopropylmalate dehydratase activity"/>
    <property type="evidence" value="ECO:0007669"/>
    <property type="project" value="UniProtKB-UniRule"/>
</dbReference>
<dbReference type="GO" id="GO:0051539">
    <property type="term" value="F:4 iron, 4 sulfur cluster binding"/>
    <property type="evidence" value="ECO:0007669"/>
    <property type="project" value="UniProtKB-KW"/>
</dbReference>
<dbReference type="GO" id="GO:0046872">
    <property type="term" value="F:metal ion binding"/>
    <property type="evidence" value="ECO:0007669"/>
    <property type="project" value="UniProtKB-KW"/>
</dbReference>
<dbReference type="GO" id="GO:0009098">
    <property type="term" value="P:L-leucine biosynthetic process"/>
    <property type="evidence" value="ECO:0007669"/>
    <property type="project" value="UniProtKB-UniRule"/>
</dbReference>
<dbReference type="CDD" id="cd01583">
    <property type="entry name" value="IPMI"/>
    <property type="match status" value="1"/>
</dbReference>
<dbReference type="Gene3D" id="3.30.499.10">
    <property type="entry name" value="Aconitase, domain 3"/>
    <property type="match status" value="2"/>
</dbReference>
<dbReference type="HAMAP" id="MF_01026">
    <property type="entry name" value="LeuC_type1"/>
    <property type="match status" value="1"/>
</dbReference>
<dbReference type="InterPro" id="IPR004430">
    <property type="entry name" value="3-IsopropMal_deHydase_lsu"/>
</dbReference>
<dbReference type="InterPro" id="IPR015931">
    <property type="entry name" value="Acnase/IPM_dHydase_lsu_aba_1/3"/>
</dbReference>
<dbReference type="InterPro" id="IPR001030">
    <property type="entry name" value="Acoase/IPM_deHydtase_lsu_aba"/>
</dbReference>
<dbReference type="InterPro" id="IPR018136">
    <property type="entry name" value="Aconitase_4Fe-4S_BS"/>
</dbReference>
<dbReference type="InterPro" id="IPR036008">
    <property type="entry name" value="Aconitase_4Fe-4S_dom"/>
</dbReference>
<dbReference type="InterPro" id="IPR050067">
    <property type="entry name" value="IPM_dehydratase_rel_enz"/>
</dbReference>
<dbReference type="InterPro" id="IPR033941">
    <property type="entry name" value="IPMI_cat"/>
</dbReference>
<dbReference type="NCBIfam" id="TIGR00170">
    <property type="entry name" value="leuC"/>
    <property type="match status" value="1"/>
</dbReference>
<dbReference type="NCBIfam" id="NF004016">
    <property type="entry name" value="PRK05478.1"/>
    <property type="match status" value="1"/>
</dbReference>
<dbReference type="NCBIfam" id="NF009116">
    <property type="entry name" value="PRK12466.1"/>
    <property type="match status" value="1"/>
</dbReference>
<dbReference type="PANTHER" id="PTHR43822:SF9">
    <property type="entry name" value="3-ISOPROPYLMALATE DEHYDRATASE"/>
    <property type="match status" value="1"/>
</dbReference>
<dbReference type="PANTHER" id="PTHR43822">
    <property type="entry name" value="HOMOACONITASE, MITOCHONDRIAL-RELATED"/>
    <property type="match status" value="1"/>
</dbReference>
<dbReference type="Pfam" id="PF00330">
    <property type="entry name" value="Aconitase"/>
    <property type="match status" value="1"/>
</dbReference>
<dbReference type="PRINTS" id="PR00415">
    <property type="entry name" value="ACONITASE"/>
</dbReference>
<dbReference type="SUPFAM" id="SSF53732">
    <property type="entry name" value="Aconitase iron-sulfur domain"/>
    <property type="match status" value="1"/>
</dbReference>
<dbReference type="PROSITE" id="PS01244">
    <property type="entry name" value="ACONITASE_2"/>
    <property type="match status" value="1"/>
</dbReference>
<proteinExistence type="inferred from homology"/>
<keyword id="KW-0004">4Fe-4S</keyword>
<keyword id="KW-0028">Amino-acid biosynthesis</keyword>
<keyword id="KW-0100">Branched-chain amino acid biosynthesis</keyword>
<keyword id="KW-0408">Iron</keyword>
<keyword id="KW-0411">Iron-sulfur</keyword>
<keyword id="KW-0432">Leucine biosynthesis</keyword>
<keyword id="KW-0456">Lyase</keyword>
<keyword id="KW-0479">Metal-binding</keyword>
<keyword id="KW-1185">Reference proteome</keyword>
<comment type="function">
    <text evidence="1">Catalyzes the isomerization between 2-isopropylmalate and 3-isopropylmalate, via the formation of 2-isopropylmaleate.</text>
</comment>
<comment type="catalytic activity">
    <reaction evidence="1">
        <text>(2R,3S)-3-isopropylmalate = (2S)-2-isopropylmalate</text>
        <dbReference type="Rhea" id="RHEA:32287"/>
        <dbReference type="ChEBI" id="CHEBI:1178"/>
        <dbReference type="ChEBI" id="CHEBI:35121"/>
        <dbReference type="EC" id="4.2.1.33"/>
    </reaction>
</comment>
<comment type="cofactor">
    <cofactor evidence="1">
        <name>[4Fe-4S] cluster</name>
        <dbReference type="ChEBI" id="CHEBI:49883"/>
    </cofactor>
    <text evidence="1">Binds 1 [4Fe-4S] cluster per subunit.</text>
</comment>
<comment type="pathway">
    <text evidence="1">Amino-acid biosynthesis; L-leucine biosynthesis; L-leucine from 3-methyl-2-oxobutanoate: step 2/4.</text>
</comment>
<comment type="subunit">
    <text evidence="1">Heterodimer of LeuC and LeuD.</text>
</comment>
<comment type="similarity">
    <text evidence="1">Belongs to the aconitase/IPM isomerase family. LeuC type 1 subfamily.</text>
</comment>
<gene>
    <name evidence="1" type="primary">leuC</name>
    <name type="ordered locus">BT_1860</name>
</gene>
<sequence>MNTLFDKIWDAHVVTTVEDGPTQLYIDRLYCHEVTSPQAFAGLRERGIKVLRPEKVFCMPDHNTPTHDQDKPIEDPISKTQVDTLTKNAKDFGLTHFGMMHPKNGIIHVVGPERALTLPGMTIVCGDSHTSTHGAMGAIAFGIGTSEVEMVLASQCILQSRPKTMRITVDGELGKGVTAKDVALYMMSKMTTSGATGYFVEYAGSAIRNLTMEGRLTLCNLSIEMGARGGMVAPDEVTFEYIKGRENAPQGEAWDQAMEYWKTLKSDDDAVFDQEVRFDAADIEPMITYGTNPGMGMGITQNIPTTEGMGEAAQVSFKKSMEYMGFQPGESLLGKKIDYVFLGACTNGRIEDFRAFASLVKGRRKADNVIAWLVPGSWMVDAQIRKEGIDKILTEAGFAIRQPGCSACLAMNDDKIPAGKYSVSTSNRNFEGRQGPGARTLLASPLVAAAAAVTGVITDPRELM</sequence>
<organism>
    <name type="scientific">Bacteroides thetaiotaomicron (strain ATCC 29148 / DSM 2079 / JCM 5827 / CCUG 10774 / NCTC 10582 / VPI-5482 / E50)</name>
    <dbReference type="NCBI Taxonomy" id="226186"/>
    <lineage>
        <taxon>Bacteria</taxon>
        <taxon>Pseudomonadati</taxon>
        <taxon>Bacteroidota</taxon>
        <taxon>Bacteroidia</taxon>
        <taxon>Bacteroidales</taxon>
        <taxon>Bacteroidaceae</taxon>
        <taxon>Bacteroides</taxon>
    </lineage>
</organism>
<protein>
    <recommendedName>
        <fullName evidence="1">3-isopropylmalate dehydratase large subunit</fullName>
        <ecNumber evidence="1">4.2.1.33</ecNumber>
    </recommendedName>
    <alternativeName>
        <fullName evidence="1">Alpha-IPM isomerase</fullName>
        <shortName evidence="1">IPMI</shortName>
    </alternativeName>
    <alternativeName>
        <fullName evidence="1">Isopropylmalate isomerase</fullName>
    </alternativeName>
</protein>
<name>LEUC_BACTN</name>